<proteinExistence type="inferred from homology"/>
<feature type="chain" id="PRO_0000374312" description="tRNA-2-methylthio-N(6)-dimethylallyladenosine synthase">
    <location>
        <begin position="1"/>
        <end position="540"/>
    </location>
</feature>
<feature type="domain" description="MTTase N-terminal" evidence="1">
    <location>
        <begin position="4"/>
        <end position="120"/>
    </location>
</feature>
<feature type="domain" description="Radical SAM core" evidence="2">
    <location>
        <begin position="143"/>
        <end position="374"/>
    </location>
</feature>
<feature type="domain" description="TRAM" evidence="1">
    <location>
        <begin position="376"/>
        <end position="468"/>
    </location>
</feature>
<feature type="region of interest" description="Disordered" evidence="3">
    <location>
        <begin position="480"/>
        <end position="540"/>
    </location>
</feature>
<feature type="compositionally biased region" description="Low complexity" evidence="3">
    <location>
        <begin position="492"/>
        <end position="502"/>
    </location>
</feature>
<feature type="compositionally biased region" description="Low complexity" evidence="3">
    <location>
        <begin position="520"/>
        <end position="533"/>
    </location>
</feature>
<feature type="binding site" evidence="1">
    <location>
        <position position="13"/>
    </location>
    <ligand>
        <name>[4Fe-4S] cluster</name>
        <dbReference type="ChEBI" id="CHEBI:49883"/>
        <label>1</label>
    </ligand>
</feature>
<feature type="binding site" evidence="1">
    <location>
        <position position="49"/>
    </location>
    <ligand>
        <name>[4Fe-4S] cluster</name>
        <dbReference type="ChEBI" id="CHEBI:49883"/>
        <label>1</label>
    </ligand>
</feature>
<feature type="binding site" evidence="1">
    <location>
        <position position="83"/>
    </location>
    <ligand>
        <name>[4Fe-4S] cluster</name>
        <dbReference type="ChEBI" id="CHEBI:49883"/>
        <label>1</label>
    </ligand>
</feature>
<feature type="binding site" evidence="1">
    <location>
        <position position="157"/>
    </location>
    <ligand>
        <name>[4Fe-4S] cluster</name>
        <dbReference type="ChEBI" id="CHEBI:49883"/>
        <label>2</label>
        <note>4Fe-4S-S-AdoMet</note>
    </ligand>
</feature>
<feature type="binding site" evidence="1">
    <location>
        <position position="161"/>
    </location>
    <ligand>
        <name>[4Fe-4S] cluster</name>
        <dbReference type="ChEBI" id="CHEBI:49883"/>
        <label>2</label>
        <note>4Fe-4S-S-AdoMet</note>
    </ligand>
</feature>
<feature type="binding site" evidence="1">
    <location>
        <position position="164"/>
    </location>
    <ligand>
        <name>[4Fe-4S] cluster</name>
        <dbReference type="ChEBI" id="CHEBI:49883"/>
        <label>2</label>
        <note>4Fe-4S-S-AdoMet</note>
    </ligand>
</feature>
<comment type="function">
    <text evidence="1">Catalyzes the methylthiolation of N6-(dimethylallyl)adenosine (i(6)A), leading to the formation of 2-methylthio-N6-(dimethylallyl)adenosine (ms(2)i(6)A) at position 37 in tRNAs that read codons beginning with uridine.</text>
</comment>
<comment type="catalytic activity">
    <reaction evidence="1">
        <text>N(6)-dimethylallyladenosine(37) in tRNA + (sulfur carrier)-SH + AH2 + 2 S-adenosyl-L-methionine = 2-methylsulfanyl-N(6)-dimethylallyladenosine(37) in tRNA + (sulfur carrier)-H + 5'-deoxyadenosine + L-methionine + A + S-adenosyl-L-homocysteine + 2 H(+)</text>
        <dbReference type="Rhea" id="RHEA:37067"/>
        <dbReference type="Rhea" id="RHEA-COMP:10375"/>
        <dbReference type="Rhea" id="RHEA-COMP:10376"/>
        <dbReference type="Rhea" id="RHEA-COMP:14737"/>
        <dbReference type="Rhea" id="RHEA-COMP:14739"/>
        <dbReference type="ChEBI" id="CHEBI:13193"/>
        <dbReference type="ChEBI" id="CHEBI:15378"/>
        <dbReference type="ChEBI" id="CHEBI:17319"/>
        <dbReference type="ChEBI" id="CHEBI:17499"/>
        <dbReference type="ChEBI" id="CHEBI:29917"/>
        <dbReference type="ChEBI" id="CHEBI:57844"/>
        <dbReference type="ChEBI" id="CHEBI:57856"/>
        <dbReference type="ChEBI" id="CHEBI:59789"/>
        <dbReference type="ChEBI" id="CHEBI:64428"/>
        <dbReference type="ChEBI" id="CHEBI:74415"/>
        <dbReference type="ChEBI" id="CHEBI:74417"/>
        <dbReference type="EC" id="2.8.4.3"/>
    </reaction>
</comment>
<comment type="cofactor">
    <cofactor evidence="1">
        <name>[4Fe-4S] cluster</name>
        <dbReference type="ChEBI" id="CHEBI:49883"/>
    </cofactor>
    <text evidence="1">Binds 2 [4Fe-4S] clusters. One cluster is coordinated with 3 cysteines and an exchangeable S-adenosyl-L-methionine.</text>
</comment>
<comment type="subunit">
    <text evidence="1">Monomer.</text>
</comment>
<comment type="subcellular location">
    <subcellularLocation>
        <location evidence="1">Cytoplasm</location>
    </subcellularLocation>
</comment>
<comment type="similarity">
    <text evidence="1">Belongs to the methylthiotransferase family. MiaB subfamily.</text>
</comment>
<evidence type="ECO:0000255" key="1">
    <source>
        <dbReference type="HAMAP-Rule" id="MF_01864"/>
    </source>
</evidence>
<evidence type="ECO:0000255" key="2">
    <source>
        <dbReference type="PROSITE-ProRule" id="PRU01266"/>
    </source>
</evidence>
<evidence type="ECO:0000256" key="3">
    <source>
        <dbReference type="SAM" id="MobiDB-lite"/>
    </source>
</evidence>
<dbReference type="EC" id="2.8.4.3" evidence="1"/>
<dbReference type="EMBL" id="CP000249">
    <property type="protein sequence ID" value="ABD12871.1"/>
    <property type="molecule type" value="Genomic_DNA"/>
</dbReference>
<dbReference type="RefSeq" id="WP_011437896.1">
    <property type="nucleotide sequence ID" value="NZ_LRTJ01000037.1"/>
</dbReference>
<dbReference type="SMR" id="Q2J771"/>
<dbReference type="STRING" id="106370.Francci3_3518"/>
<dbReference type="KEGG" id="fra:Francci3_3518"/>
<dbReference type="eggNOG" id="COG0621">
    <property type="taxonomic scope" value="Bacteria"/>
</dbReference>
<dbReference type="HOGENOM" id="CLU_018697_2_2_11"/>
<dbReference type="OrthoDB" id="9805215at2"/>
<dbReference type="PhylomeDB" id="Q2J771"/>
<dbReference type="Proteomes" id="UP000001937">
    <property type="component" value="Chromosome"/>
</dbReference>
<dbReference type="GO" id="GO:0005829">
    <property type="term" value="C:cytosol"/>
    <property type="evidence" value="ECO:0007669"/>
    <property type="project" value="TreeGrafter"/>
</dbReference>
<dbReference type="GO" id="GO:0051539">
    <property type="term" value="F:4 iron, 4 sulfur cluster binding"/>
    <property type="evidence" value="ECO:0007669"/>
    <property type="project" value="UniProtKB-UniRule"/>
</dbReference>
<dbReference type="GO" id="GO:0046872">
    <property type="term" value="F:metal ion binding"/>
    <property type="evidence" value="ECO:0007669"/>
    <property type="project" value="UniProtKB-KW"/>
</dbReference>
<dbReference type="GO" id="GO:0035597">
    <property type="term" value="F:N6-isopentenyladenosine methylthiotransferase activity"/>
    <property type="evidence" value="ECO:0007669"/>
    <property type="project" value="TreeGrafter"/>
</dbReference>
<dbReference type="CDD" id="cd01335">
    <property type="entry name" value="Radical_SAM"/>
    <property type="match status" value="1"/>
</dbReference>
<dbReference type="FunFam" id="3.40.50.12160:FF:000003">
    <property type="entry name" value="CDK5 regulatory subunit-associated protein 1"/>
    <property type="match status" value="1"/>
</dbReference>
<dbReference type="FunFam" id="3.80.30.20:FF:000001">
    <property type="entry name" value="tRNA-2-methylthio-N(6)-dimethylallyladenosine synthase 2"/>
    <property type="match status" value="1"/>
</dbReference>
<dbReference type="Gene3D" id="3.40.50.12160">
    <property type="entry name" value="Methylthiotransferase, N-terminal domain"/>
    <property type="match status" value="1"/>
</dbReference>
<dbReference type="Gene3D" id="3.80.30.20">
    <property type="entry name" value="tm_1862 like domain"/>
    <property type="match status" value="1"/>
</dbReference>
<dbReference type="HAMAP" id="MF_01864">
    <property type="entry name" value="tRNA_metthiotr_MiaB"/>
    <property type="match status" value="1"/>
</dbReference>
<dbReference type="InterPro" id="IPR006638">
    <property type="entry name" value="Elp3/MiaA/NifB-like_rSAM"/>
</dbReference>
<dbReference type="InterPro" id="IPR005839">
    <property type="entry name" value="Methylthiotransferase"/>
</dbReference>
<dbReference type="InterPro" id="IPR020612">
    <property type="entry name" value="Methylthiotransferase_CS"/>
</dbReference>
<dbReference type="InterPro" id="IPR013848">
    <property type="entry name" value="Methylthiotransferase_N"/>
</dbReference>
<dbReference type="InterPro" id="IPR038135">
    <property type="entry name" value="Methylthiotransferase_N_sf"/>
</dbReference>
<dbReference type="InterPro" id="IPR006463">
    <property type="entry name" value="MiaB_methiolase"/>
</dbReference>
<dbReference type="InterPro" id="IPR007197">
    <property type="entry name" value="rSAM"/>
</dbReference>
<dbReference type="InterPro" id="IPR023404">
    <property type="entry name" value="rSAM_horseshoe"/>
</dbReference>
<dbReference type="InterPro" id="IPR002792">
    <property type="entry name" value="TRAM_dom"/>
</dbReference>
<dbReference type="NCBIfam" id="TIGR01574">
    <property type="entry name" value="miaB-methiolase"/>
    <property type="match status" value="1"/>
</dbReference>
<dbReference type="NCBIfam" id="TIGR00089">
    <property type="entry name" value="MiaB/RimO family radical SAM methylthiotransferase"/>
    <property type="match status" value="1"/>
</dbReference>
<dbReference type="PANTHER" id="PTHR43020">
    <property type="entry name" value="CDK5 REGULATORY SUBUNIT-ASSOCIATED PROTEIN 1"/>
    <property type="match status" value="1"/>
</dbReference>
<dbReference type="PANTHER" id="PTHR43020:SF2">
    <property type="entry name" value="MITOCHONDRIAL TRNA METHYLTHIOTRANSFERASE CDK5RAP1"/>
    <property type="match status" value="1"/>
</dbReference>
<dbReference type="Pfam" id="PF04055">
    <property type="entry name" value="Radical_SAM"/>
    <property type="match status" value="1"/>
</dbReference>
<dbReference type="Pfam" id="PF00919">
    <property type="entry name" value="UPF0004"/>
    <property type="match status" value="1"/>
</dbReference>
<dbReference type="SFLD" id="SFLDF00273">
    <property type="entry name" value="(dimethylallyl)adenosine_tRNA"/>
    <property type="match status" value="1"/>
</dbReference>
<dbReference type="SFLD" id="SFLDG01082">
    <property type="entry name" value="B12-binding_domain_containing"/>
    <property type="match status" value="1"/>
</dbReference>
<dbReference type="SFLD" id="SFLDG01061">
    <property type="entry name" value="methylthiotransferase"/>
    <property type="match status" value="1"/>
</dbReference>
<dbReference type="SMART" id="SM00729">
    <property type="entry name" value="Elp3"/>
    <property type="match status" value="1"/>
</dbReference>
<dbReference type="SUPFAM" id="SSF102114">
    <property type="entry name" value="Radical SAM enzymes"/>
    <property type="match status" value="1"/>
</dbReference>
<dbReference type="PROSITE" id="PS51449">
    <property type="entry name" value="MTTASE_N"/>
    <property type="match status" value="1"/>
</dbReference>
<dbReference type="PROSITE" id="PS01278">
    <property type="entry name" value="MTTASE_RADICAL"/>
    <property type="match status" value="1"/>
</dbReference>
<dbReference type="PROSITE" id="PS51918">
    <property type="entry name" value="RADICAL_SAM"/>
    <property type="match status" value="1"/>
</dbReference>
<dbReference type="PROSITE" id="PS50926">
    <property type="entry name" value="TRAM"/>
    <property type="match status" value="1"/>
</dbReference>
<gene>
    <name evidence="1" type="primary">miaB</name>
    <name type="ordered locus">Francci3_3518</name>
</gene>
<keyword id="KW-0004">4Fe-4S</keyword>
<keyword id="KW-0963">Cytoplasm</keyword>
<keyword id="KW-0408">Iron</keyword>
<keyword id="KW-0411">Iron-sulfur</keyword>
<keyword id="KW-0479">Metal-binding</keyword>
<keyword id="KW-1185">Reference proteome</keyword>
<keyword id="KW-0949">S-adenosyl-L-methionine</keyword>
<keyword id="KW-0808">Transferase</keyword>
<keyword id="KW-0819">tRNA processing</keyword>
<organism>
    <name type="scientific">Frankia casuarinae (strain DSM 45818 / CECT 9043 / HFP020203 / CcI3)</name>
    <dbReference type="NCBI Taxonomy" id="106370"/>
    <lineage>
        <taxon>Bacteria</taxon>
        <taxon>Bacillati</taxon>
        <taxon>Actinomycetota</taxon>
        <taxon>Actinomycetes</taxon>
        <taxon>Frankiales</taxon>
        <taxon>Frankiaceae</taxon>
        <taxon>Frankia</taxon>
    </lineage>
</organism>
<reference key="1">
    <citation type="journal article" date="2007" name="Genome Res.">
        <title>Genome characteristics of facultatively symbiotic Frankia sp. strains reflect host range and host plant biogeography.</title>
        <authorList>
            <person name="Normand P."/>
            <person name="Lapierre P."/>
            <person name="Tisa L.S."/>
            <person name="Gogarten J.P."/>
            <person name="Alloisio N."/>
            <person name="Bagnarol E."/>
            <person name="Bassi C.A."/>
            <person name="Berry A.M."/>
            <person name="Bickhart D.M."/>
            <person name="Choisne N."/>
            <person name="Couloux A."/>
            <person name="Cournoyer B."/>
            <person name="Cruveiller S."/>
            <person name="Daubin V."/>
            <person name="Demange N."/>
            <person name="Francino M.P."/>
            <person name="Goltsman E."/>
            <person name="Huang Y."/>
            <person name="Kopp O.R."/>
            <person name="Labarre L."/>
            <person name="Lapidus A."/>
            <person name="Lavire C."/>
            <person name="Marechal J."/>
            <person name="Martinez M."/>
            <person name="Mastronunzio J.E."/>
            <person name="Mullin B.C."/>
            <person name="Niemann J."/>
            <person name="Pujic P."/>
            <person name="Rawnsley T."/>
            <person name="Rouy Z."/>
            <person name="Schenowitz C."/>
            <person name="Sellstedt A."/>
            <person name="Tavares F."/>
            <person name="Tomkins J.P."/>
            <person name="Vallenet D."/>
            <person name="Valverde C."/>
            <person name="Wall L.G."/>
            <person name="Wang Y."/>
            <person name="Medigue C."/>
            <person name="Benson D.R."/>
        </authorList>
    </citation>
    <scope>NUCLEOTIDE SEQUENCE [LARGE SCALE GENOMIC DNA]</scope>
    <source>
        <strain>DSM 45818 / CECT 9043 / HFP020203 / CcI3</strain>
    </source>
</reference>
<name>MIAB_FRACC</name>
<accession>Q2J771</accession>
<protein>
    <recommendedName>
        <fullName evidence="1">tRNA-2-methylthio-N(6)-dimethylallyladenosine synthase</fullName>
        <ecNumber evidence="1">2.8.4.3</ecNumber>
    </recommendedName>
    <alternativeName>
        <fullName evidence="1">(Dimethylallyl)adenosine tRNA methylthiotransferase MiaB</fullName>
    </alternativeName>
    <alternativeName>
        <fullName evidence="1">tRNA-i(6)A37 methylthiotransferase</fullName>
    </alternativeName>
</protein>
<sequence length="540" mass="57332">MNGRSYEVRTFGCQMNVHDSERLCGLLESAGYSPVDPGGEADVVVFNTCAVRENADNRLYGNLGQLVPVKKGHPGMQIAVGGCLAQKDRAAILDRAPWVDVVFGTHNLHRLPVLLERARHNAAAQVEIAEALEVFPSSLPTRRASHHSAWVSISVGCDNTCTFCIVPSLRGRERDRRPGDVLAEVEALVAEGALEITLLGQNVNSYGRSLGDPGAFAKLLAACGRVDGLERVRFTSPHPRDFTDDVIEAMATTSNVCHQLHMPLQSGSDTVLRRMRRSYRRDRFLGIVERVRAAMPDAAITTDIIVGFPGETEADFADTLDVVRAARFSGAFTFQYSPRPGTPAATMDAQVDRATVADRYTRLVALQDEISWAENRALVGRRVEVLVSEGEGRKDGATGRMSGRARDGRLVHFRADEAASSSTGSGPRAGGAAPAVAVAVAPTVRPGDVVETVVTRAAPHHLTADGPLRSHRATRAGDAWALGRDGDGGGAAAAQQPADGRPIVTLGIPSLRPSSPDPVGPASADAASAGADACCTPVRR</sequence>